<name>QUEC_HALHL</name>
<accession>A1WY18</accession>
<organism>
    <name type="scientific">Halorhodospira halophila (strain DSM 244 / SL1)</name>
    <name type="common">Ectothiorhodospira halophila (strain DSM 244 / SL1)</name>
    <dbReference type="NCBI Taxonomy" id="349124"/>
    <lineage>
        <taxon>Bacteria</taxon>
        <taxon>Pseudomonadati</taxon>
        <taxon>Pseudomonadota</taxon>
        <taxon>Gammaproteobacteria</taxon>
        <taxon>Chromatiales</taxon>
        <taxon>Ectothiorhodospiraceae</taxon>
        <taxon>Halorhodospira</taxon>
    </lineage>
</organism>
<sequence length="247" mass="27288">MAERPQRVPASTEQESALVLFSGGQDSTACLAWALEYFSRVETVGFAYGQRHDVELSAREEVLDGLRALRPDWAARLGSDRVLDAGVLGEISDTALTQDAEIAYDARGLPTTFVPGRNLLFFTLAAAVAHRRGIRHLVAGVCETDFSGYPDCRDDTVKSLQVTLNLGMAERLVLHTPLMWLDKAQTWMLAEQLGGSALVDLTVEASHTCYYGMREQRHEWGYGCGECPACRLRAEGWHRFRHGSGAQ</sequence>
<comment type="function">
    <text evidence="1">Catalyzes the ATP-dependent conversion of 7-carboxy-7-deazaguanine (CDG) to 7-cyano-7-deazaguanine (preQ(0)).</text>
</comment>
<comment type="catalytic activity">
    <reaction evidence="1">
        <text>7-carboxy-7-deazaguanine + NH4(+) + ATP = 7-cyano-7-deazaguanine + ADP + phosphate + H2O + H(+)</text>
        <dbReference type="Rhea" id="RHEA:27982"/>
        <dbReference type="ChEBI" id="CHEBI:15377"/>
        <dbReference type="ChEBI" id="CHEBI:15378"/>
        <dbReference type="ChEBI" id="CHEBI:28938"/>
        <dbReference type="ChEBI" id="CHEBI:30616"/>
        <dbReference type="ChEBI" id="CHEBI:43474"/>
        <dbReference type="ChEBI" id="CHEBI:45075"/>
        <dbReference type="ChEBI" id="CHEBI:61036"/>
        <dbReference type="ChEBI" id="CHEBI:456216"/>
        <dbReference type="EC" id="6.3.4.20"/>
    </reaction>
</comment>
<comment type="cofactor">
    <cofactor evidence="1">
        <name>Zn(2+)</name>
        <dbReference type="ChEBI" id="CHEBI:29105"/>
    </cofactor>
    <text evidence="1">Binds 1 zinc ion per subunit.</text>
</comment>
<comment type="pathway">
    <text evidence="1">Purine metabolism; 7-cyano-7-deazaguanine biosynthesis.</text>
</comment>
<comment type="similarity">
    <text evidence="1">Belongs to the QueC family.</text>
</comment>
<dbReference type="EC" id="6.3.4.20" evidence="1"/>
<dbReference type="EMBL" id="CP000544">
    <property type="protein sequence ID" value="ABM62580.1"/>
    <property type="molecule type" value="Genomic_DNA"/>
</dbReference>
<dbReference type="RefSeq" id="WP_011814602.1">
    <property type="nucleotide sequence ID" value="NC_008789.1"/>
</dbReference>
<dbReference type="SMR" id="A1WY18"/>
<dbReference type="STRING" id="349124.Hhal_1816"/>
<dbReference type="KEGG" id="hha:Hhal_1816"/>
<dbReference type="eggNOG" id="COG0603">
    <property type="taxonomic scope" value="Bacteria"/>
</dbReference>
<dbReference type="HOGENOM" id="CLU_081854_0_0_6"/>
<dbReference type="OrthoDB" id="9789567at2"/>
<dbReference type="UniPathway" id="UPA00391"/>
<dbReference type="Proteomes" id="UP000000647">
    <property type="component" value="Chromosome"/>
</dbReference>
<dbReference type="GO" id="GO:0005524">
    <property type="term" value="F:ATP binding"/>
    <property type="evidence" value="ECO:0007669"/>
    <property type="project" value="UniProtKB-UniRule"/>
</dbReference>
<dbReference type="GO" id="GO:0016879">
    <property type="term" value="F:ligase activity, forming carbon-nitrogen bonds"/>
    <property type="evidence" value="ECO:0007669"/>
    <property type="project" value="UniProtKB-UniRule"/>
</dbReference>
<dbReference type="GO" id="GO:0008270">
    <property type="term" value="F:zinc ion binding"/>
    <property type="evidence" value="ECO:0007669"/>
    <property type="project" value="UniProtKB-UniRule"/>
</dbReference>
<dbReference type="GO" id="GO:0008616">
    <property type="term" value="P:queuosine biosynthetic process"/>
    <property type="evidence" value="ECO:0007669"/>
    <property type="project" value="UniProtKB-UniRule"/>
</dbReference>
<dbReference type="CDD" id="cd01995">
    <property type="entry name" value="QueC-like"/>
    <property type="match status" value="1"/>
</dbReference>
<dbReference type="Gene3D" id="3.40.50.620">
    <property type="entry name" value="HUPs"/>
    <property type="match status" value="1"/>
</dbReference>
<dbReference type="HAMAP" id="MF_01633">
    <property type="entry name" value="QueC"/>
    <property type="match status" value="1"/>
</dbReference>
<dbReference type="InterPro" id="IPR018317">
    <property type="entry name" value="QueC"/>
</dbReference>
<dbReference type="InterPro" id="IPR014729">
    <property type="entry name" value="Rossmann-like_a/b/a_fold"/>
</dbReference>
<dbReference type="NCBIfam" id="TIGR00364">
    <property type="entry name" value="7-cyano-7-deazaguanine synthase QueC"/>
    <property type="match status" value="1"/>
</dbReference>
<dbReference type="PANTHER" id="PTHR42914">
    <property type="entry name" value="7-CYANO-7-DEAZAGUANINE SYNTHASE"/>
    <property type="match status" value="1"/>
</dbReference>
<dbReference type="PANTHER" id="PTHR42914:SF1">
    <property type="entry name" value="7-CYANO-7-DEAZAGUANINE SYNTHASE"/>
    <property type="match status" value="1"/>
</dbReference>
<dbReference type="Pfam" id="PF06508">
    <property type="entry name" value="QueC"/>
    <property type="match status" value="1"/>
</dbReference>
<dbReference type="PIRSF" id="PIRSF006293">
    <property type="entry name" value="ExsB"/>
    <property type="match status" value="1"/>
</dbReference>
<dbReference type="SUPFAM" id="SSF52402">
    <property type="entry name" value="Adenine nucleotide alpha hydrolases-like"/>
    <property type="match status" value="1"/>
</dbReference>
<reference key="1">
    <citation type="submission" date="2006-12" db="EMBL/GenBank/DDBJ databases">
        <title>Complete sequence of Halorhodospira halophila SL1.</title>
        <authorList>
            <consortium name="US DOE Joint Genome Institute"/>
            <person name="Copeland A."/>
            <person name="Lucas S."/>
            <person name="Lapidus A."/>
            <person name="Barry K."/>
            <person name="Detter J.C."/>
            <person name="Glavina del Rio T."/>
            <person name="Hammon N."/>
            <person name="Israni S."/>
            <person name="Dalin E."/>
            <person name="Tice H."/>
            <person name="Pitluck S."/>
            <person name="Saunders E."/>
            <person name="Brettin T."/>
            <person name="Bruce D."/>
            <person name="Han C."/>
            <person name="Tapia R."/>
            <person name="Schmutz J."/>
            <person name="Larimer F."/>
            <person name="Land M."/>
            <person name="Hauser L."/>
            <person name="Kyrpides N."/>
            <person name="Mikhailova N."/>
            <person name="Hoff W."/>
            <person name="Richardson P."/>
        </authorList>
    </citation>
    <scope>NUCLEOTIDE SEQUENCE [LARGE SCALE GENOMIC DNA]</scope>
    <source>
        <strain>DSM 244 / SL1</strain>
    </source>
</reference>
<keyword id="KW-0067">ATP-binding</keyword>
<keyword id="KW-0436">Ligase</keyword>
<keyword id="KW-0479">Metal-binding</keyword>
<keyword id="KW-0547">Nucleotide-binding</keyword>
<keyword id="KW-0671">Queuosine biosynthesis</keyword>
<keyword id="KW-1185">Reference proteome</keyword>
<keyword id="KW-0862">Zinc</keyword>
<feature type="chain" id="PRO_0000336917" description="7-cyano-7-deazaguanine synthase">
    <location>
        <begin position="1"/>
        <end position="247"/>
    </location>
</feature>
<feature type="binding site" evidence="1">
    <location>
        <begin position="21"/>
        <end position="31"/>
    </location>
    <ligand>
        <name>ATP</name>
        <dbReference type="ChEBI" id="CHEBI:30616"/>
    </ligand>
</feature>
<feature type="binding site" evidence="1">
    <location>
        <position position="209"/>
    </location>
    <ligand>
        <name>Zn(2+)</name>
        <dbReference type="ChEBI" id="CHEBI:29105"/>
    </ligand>
</feature>
<feature type="binding site" evidence="1">
    <location>
        <position position="224"/>
    </location>
    <ligand>
        <name>Zn(2+)</name>
        <dbReference type="ChEBI" id="CHEBI:29105"/>
    </ligand>
</feature>
<feature type="binding site" evidence="1">
    <location>
        <position position="227"/>
    </location>
    <ligand>
        <name>Zn(2+)</name>
        <dbReference type="ChEBI" id="CHEBI:29105"/>
    </ligand>
</feature>
<feature type="binding site" evidence="1">
    <location>
        <position position="230"/>
    </location>
    <ligand>
        <name>Zn(2+)</name>
        <dbReference type="ChEBI" id="CHEBI:29105"/>
    </ligand>
</feature>
<evidence type="ECO:0000255" key="1">
    <source>
        <dbReference type="HAMAP-Rule" id="MF_01633"/>
    </source>
</evidence>
<protein>
    <recommendedName>
        <fullName evidence="1">7-cyano-7-deazaguanine synthase</fullName>
        <ecNumber evidence="1">6.3.4.20</ecNumber>
    </recommendedName>
    <alternativeName>
        <fullName evidence="1">7-cyano-7-carbaguanine synthase</fullName>
    </alternativeName>
    <alternativeName>
        <fullName evidence="1">PreQ(0) synthase</fullName>
    </alternativeName>
    <alternativeName>
        <fullName evidence="1">Queuosine biosynthesis protein QueC</fullName>
    </alternativeName>
</protein>
<proteinExistence type="inferred from homology"/>
<gene>
    <name evidence="1" type="primary">queC</name>
    <name type="ordered locus">Hhal_1816</name>
</gene>